<proteinExistence type="inferred from homology"/>
<dbReference type="EC" id="3.6.5.-" evidence="1"/>
<dbReference type="EMBL" id="CP000141">
    <property type="protein sequence ID" value="ABB13865.1"/>
    <property type="molecule type" value="Genomic_DNA"/>
</dbReference>
<dbReference type="SMR" id="Q3AF51"/>
<dbReference type="FunCoup" id="Q3AF51">
    <property type="interactions" value="381"/>
</dbReference>
<dbReference type="STRING" id="246194.CHY_0370"/>
<dbReference type="KEGG" id="chy:CHY_0370"/>
<dbReference type="eggNOG" id="COG0536">
    <property type="taxonomic scope" value="Bacteria"/>
</dbReference>
<dbReference type="HOGENOM" id="CLU_011747_2_1_9"/>
<dbReference type="InParanoid" id="Q3AF51"/>
<dbReference type="OrthoDB" id="9807318at2"/>
<dbReference type="Proteomes" id="UP000002706">
    <property type="component" value="Chromosome"/>
</dbReference>
<dbReference type="GO" id="GO:0005737">
    <property type="term" value="C:cytoplasm"/>
    <property type="evidence" value="ECO:0007669"/>
    <property type="project" value="UniProtKB-SubCell"/>
</dbReference>
<dbReference type="GO" id="GO:0005525">
    <property type="term" value="F:GTP binding"/>
    <property type="evidence" value="ECO:0007669"/>
    <property type="project" value="UniProtKB-UniRule"/>
</dbReference>
<dbReference type="GO" id="GO:0003924">
    <property type="term" value="F:GTPase activity"/>
    <property type="evidence" value="ECO:0007669"/>
    <property type="project" value="UniProtKB-UniRule"/>
</dbReference>
<dbReference type="GO" id="GO:0000287">
    <property type="term" value="F:magnesium ion binding"/>
    <property type="evidence" value="ECO:0007669"/>
    <property type="project" value="InterPro"/>
</dbReference>
<dbReference type="GO" id="GO:0042254">
    <property type="term" value="P:ribosome biogenesis"/>
    <property type="evidence" value="ECO:0007669"/>
    <property type="project" value="UniProtKB-UniRule"/>
</dbReference>
<dbReference type="CDD" id="cd01898">
    <property type="entry name" value="Obg"/>
    <property type="match status" value="1"/>
</dbReference>
<dbReference type="FunFam" id="2.70.210.12:FF:000001">
    <property type="entry name" value="GTPase Obg"/>
    <property type="match status" value="1"/>
</dbReference>
<dbReference type="Gene3D" id="3.30.300.350">
    <property type="entry name" value="GTP-binding protein OBG, C-terminal domain"/>
    <property type="match status" value="1"/>
</dbReference>
<dbReference type="Gene3D" id="2.70.210.12">
    <property type="entry name" value="GTP1/OBG domain"/>
    <property type="match status" value="1"/>
</dbReference>
<dbReference type="Gene3D" id="3.40.50.300">
    <property type="entry name" value="P-loop containing nucleotide triphosphate hydrolases"/>
    <property type="match status" value="1"/>
</dbReference>
<dbReference type="HAMAP" id="MF_01454">
    <property type="entry name" value="GTPase_Obg"/>
    <property type="match status" value="1"/>
</dbReference>
<dbReference type="InterPro" id="IPR031167">
    <property type="entry name" value="G_OBG"/>
</dbReference>
<dbReference type="InterPro" id="IPR006073">
    <property type="entry name" value="GTP-bd"/>
</dbReference>
<dbReference type="InterPro" id="IPR014100">
    <property type="entry name" value="GTP-bd_Obg/CgtA"/>
</dbReference>
<dbReference type="InterPro" id="IPR036346">
    <property type="entry name" value="GTP-bd_prot_GTP1/OBG_C_sf"/>
</dbReference>
<dbReference type="InterPro" id="IPR006074">
    <property type="entry name" value="GTP1-OBG_CS"/>
</dbReference>
<dbReference type="InterPro" id="IPR006169">
    <property type="entry name" value="GTP1_OBG_dom"/>
</dbReference>
<dbReference type="InterPro" id="IPR036726">
    <property type="entry name" value="GTP1_OBG_dom_sf"/>
</dbReference>
<dbReference type="InterPro" id="IPR045086">
    <property type="entry name" value="OBG_GTPase"/>
</dbReference>
<dbReference type="InterPro" id="IPR015349">
    <property type="entry name" value="OCT_dom"/>
</dbReference>
<dbReference type="InterPro" id="IPR027417">
    <property type="entry name" value="P-loop_NTPase"/>
</dbReference>
<dbReference type="NCBIfam" id="TIGR02729">
    <property type="entry name" value="Obg_CgtA"/>
    <property type="match status" value="1"/>
</dbReference>
<dbReference type="NCBIfam" id="TIGR03595">
    <property type="entry name" value="Obg_CgtA_exten"/>
    <property type="match status" value="1"/>
</dbReference>
<dbReference type="NCBIfam" id="NF008954">
    <property type="entry name" value="PRK12296.1"/>
    <property type="match status" value="1"/>
</dbReference>
<dbReference type="NCBIfam" id="NF008955">
    <property type="entry name" value="PRK12297.1"/>
    <property type="match status" value="1"/>
</dbReference>
<dbReference type="NCBIfam" id="NF008956">
    <property type="entry name" value="PRK12299.1"/>
    <property type="match status" value="1"/>
</dbReference>
<dbReference type="PANTHER" id="PTHR11702">
    <property type="entry name" value="DEVELOPMENTALLY REGULATED GTP-BINDING PROTEIN-RELATED"/>
    <property type="match status" value="1"/>
</dbReference>
<dbReference type="PANTHER" id="PTHR11702:SF31">
    <property type="entry name" value="MITOCHONDRIAL RIBOSOME-ASSOCIATED GTPASE 2"/>
    <property type="match status" value="1"/>
</dbReference>
<dbReference type="Pfam" id="PF09269">
    <property type="entry name" value="DUF1967"/>
    <property type="match status" value="1"/>
</dbReference>
<dbReference type="Pfam" id="PF01018">
    <property type="entry name" value="GTP1_OBG"/>
    <property type="match status" value="1"/>
</dbReference>
<dbReference type="Pfam" id="PF01926">
    <property type="entry name" value="MMR_HSR1"/>
    <property type="match status" value="1"/>
</dbReference>
<dbReference type="PIRSF" id="PIRSF002401">
    <property type="entry name" value="GTP_bd_Obg/CgtA"/>
    <property type="match status" value="1"/>
</dbReference>
<dbReference type="PRINTS" id="PR00326">
    <property type="entry name" value="GTP1OBG"/>
</dbReference>
<dbReference type="SUPFAM" id="SSF102741">
    <property type="entry name" value="Obg GTP-binding protein C-terminal domain"/>
    <property type="match status" value="1"/>
</dbReference>
<dbReference type="SUPFAM" id="SSF82051">
    <property type="entry name" value="Obg GTP-binding protein N-terminal domain"/>
    <property type="match status" value="1"/>
</dbReference>
<dbReference type="SUPFAM" id="SSF52540">
    <property type="entry name" value="P-loop containing nucleoside triphosphate hydrolases"/>
    <property type="match status" value="1"/>
</dbReference>
<dbReference type="PROSITE" id="PS51710">
    <property type="entry name" value="G_OBG"/>
    <property type="match status" value="1"/>
</dbReference>
<dbReference type="PROSITE" id="PS00905">
    <property type="entry name" value="GTP1_OBG"/>
    <property type="match status" value="1"/>
</dbReference>
<dbReference type="PROSITE" id="PS51883">
    <property type="entry name" value="OBG"/>
    <property type="match status" value="1"/>
</dbReference>
<dbReference type="PROSITE" id="PS51881">
    <property type="entry name" value="OCT"/>
    <property type="match status" value="1"/>
</dbReference>
<evidence type="ECO:0000255" key="1">
    <source>
        <dbReference type="HAMAP-Rule" id="MF_01454"/>
    </source>
</evidence>
<evidence type="ECO:0000255" key="2">
    <source>
        <dbReference type="PROSITE-ProRule" id="PRU01229"/>
    </source>
</evidence>
<evidence type="ECO:0000255" key="3">
    <source>
        <dbReference type="PROSITE-ProRule" id="PRU01231"/>
    </source>
</evidence>
<name>OBG_CARHZ</name>
<organism>
    <name type="scientific">Carboxydothermus hydrogenoformans (strain ATCC BAA-161 / DSM 6008 / Z-2901)</name>
    <dbReference type="NCBI Taxonomy" id="246194"/>
    <lineage>
        <taxon>Bacteria</taxon>
        <taxon>Bacillati</taxon>
        <taxon>Bacillota</taxon>
        <taxon>Clostridia</taxon>
        <taxon>Thermoanaerobacterales</taxon>
        <taxon>Thermoanaerobacteraceae</taxon>
        <taxon>Carboxydothermus</taxon>
    </lineage>
</organism>
<gene>
    <name evidence="1" type="primary">obg</name>
    <name type="ordered locus">CHY_0370</name>
</gene>
<keyword id="KW-0963">Cytoplasm</keyword>
<keyword id="KW-0342">GTP-binding</keyword>
<keyword id="KW-0378">Hydrolase</keyword>
<keyword id="KW-0460">Magnesium</keyword>
<keyword id="KW-0479">Metal-binding</keyword>
<keyword id="KW-0547">Nucleotide-binding</keyword>
<keyword id="KW-1185">Reference proteome</keyword>
<accession>Q3AF51</accession>
<reference key="1">
    <citation type="journal article" date="2005" name="PLoS Genet.">
        <title>Life in hot carbon monoxide: the complete genome sequence of Carboxydothermus hydrogenoformans Z-2901.</title>
        <authorList>
            <person name="Wu M."/>
            <person name="Ren Q."/>
            <person name="Durkin A.S."/>
            <person name="Daugherty S.C."/>
            <person name="Brinkac L.M."/>
            <person name="Dodson R.J."/>
            <person name="Madupu R."/>
            <person name="Sullivan S.A."/>
            <person name="Kolonay J.F."/>
            <person name="Nelson W.C."/>
            <person name="Tallon L.J."/>
            <person name="Jones K.M."/>
            <person name="Ulrich L.E."/>
            <person name="Gonzalez J.M."/>
            <person name="Zhulin I.B."/>
            <person name="Robb F.T."/>
            <person name="Eisen J.A."/>
        </authorList>
    </citation>
    <scope>NUCLEOTIDE SEQUENCE [LARGE SCALE GENOMIC DNA]</scope>
    <source>
        <strain>ATCC BAA-161 / DSM 6008 / Z-2901</strain>
    </source>
</reference>
<sequence length="429" mass="47186">MFYDTAKIYVKAGDGGNGCVSFRREKYVPNGGPDGGDGGRGGSVILVGDEGLNTLLDFRYKRHYKAPRGEHGKGSNRHGKAGENLYIRVPVGTVVKDEATGEILADITEHGQEVVVARGGRGGRGNAHFASPTHQAPKFAELGEPGEERWLLLELKLLADVGLVGYPNAGKSTLISRVSAARPKIADYPFTTLTPNLGVVEVGEGQSFVMADIPGLIEGAHAGVGLGHQFLRHVERTRVLLMVLDMSGFEGRDPVDDFEVLLKELKLYNEQLLTKPLVIAANKMDTANAQENLEKLKQHIAGKYEIYPISALTGEGLKPLIYRLWEIISTLPRESLEVKPQKVIKEQPEEGFVVEKVDGIFVVKGKKIERLVAMTNLDNEEAVDRLQRTFTRMGLEEQLKRAGVKPGDLVRIGKFEFYFVDETEGLEEE</sequence>
<protein>
    <recommendedName>
        <fullName evidence="1">GTPase Obg</fullName>
        <ecNumber evidence="1">3.6.5.-</ecNumber>
    </recommendedName>
    <alternativeName>
        <fullName evidence="1">GTP-binding protein Obg</fullName>
    </alternativeName>
</protein>
<comment type="function">
    <text evidence="1">An essential GTPase which binds GTP, GDP and possibly (p)ppGpp with moderate affinity, with high nucleotide exchange rates and a fairly low GTP hydrolysis rate. Plays a role in control of the cell cycle, stress response, ribosome biogenesis and in those bacteria that undergo differentiation, in morphogenesis control.</text>
</comment>
<comment type="cofactor">
    <cofactor evidence="1">
        <name>Mg(2+)</name>
        <dbReference type="ChEBI" id="CHEBI:18420"/>
    </cofactor>
</comment>
<comment type="subunit">
    <text evidence="1">Monomer.</text>
</comment>
<comment type="subcellular location">
    <subcellularLocation>
        <location evidence="1">Cytoplasm</location>
    </subcellularLocation>
</comment>
<comment type="similarity">
    <text evidence="1">Belongs to the TRAFAC class OBG-HflX-like GTPase superfamily. OBG GTPase family.</text>
</comment>
<feature type="chain" id="PRO_0000385808" description="GTPase Obg">
    <location>
        <begin position="1"/>
        <end position="429"/>
    </location>
</feature>
<feature type="domain" description="Obg" evidence="3">
    <location>
        <begin position="1"/>
        <end position="158"/>
    </location>
</feature>
<feature type="domain" description="OBG-type G" evidence="1">
    <location>
        <begin position="159"/>
        <end position="329"/>
    </location>
</feature>
<feature type="domain" description="OCT" evidence="2">
    <location>
        <begin position="344"/>
        <end position="421"/>
    </location>
</feature>
<feature type="binding site" evidence="1">
    <location>
        <begin position="165"/>
        <end position="172"/>
    </location>
    <ligand>
        <name>GTP</name>
        <dbReference type="ChEBI" id="CHEBI:37565"/>
    </ligand>
</feature>
<feature type="binding site" evidence="1">
    <location>
        <position position="172"/>
    </location>
    <ligand>
        <name>Mg(2+)</name>
        <dbReference type="ChEBI" id="CHEBI:18420"/>
    </ligand>
</feature>
<feature type="binding site" evidence="1">
    <location>
        <begin position="190"/>
        <end position="194"/>
    </location>
    <ligand>
        <name>GTP</name>
        <dbReference type="ChEBI" id="CHEBI:37565"/>
    </ligand>
</feature>
<feature type="binding site" evidence="1">
    <location>
        <position position="192"/>
    </location>
    <ligand>
        <name>Mg(2+)</name>
        <dbReference type="ChEBI" id="CHEBI:18420"/>
    </ligand>
</feature>
<feature type="binding site" evidence="1">
    <location>
        <begin position="212"/>
        <end position="215"/>
    </location>
    <ligand>
        <name>GTP</name>
        <dbReference type="ChEBI" id="CHEBI:37565"/>
    </ligand>
</feature>
<feature type="binding site" evidence="1">
    <location>
        <begin position="282"/>
        <end position="285"/>
    </location>
    <ligand>
        <name>GTP</name>
        <dbReference type="ChEBI" id="CHEBI:37565"/>
    </ligand>
</feature>
<feature type="binding site" evidence="1">
    <location>
        <begin position="310"/>
        <end position="312"/>
    </location>
    <ligand>
        <name>GTP</name>
        <dbReference type="ChEBI" id="CHEBI:37565"/>
    </ligand>
</feature>